<feature type="chain" id="PRO_0000148491" description="Dihydroorotate dehydrogenase (quinone)">
    <location>
        <begin position="1"/>
        <end position="351"/>
    </location>
</feature>
<feature type="active site" description="Nucleophile" evidence="1">
    <location>
        <position position="175"/>
    </location>
</feature>
<feature type="binding site" evidence="1">
    <location>
        <begin position="61"/>
        <end position="65"/>
    </location>
    <ligand>
        <name>FMN</name>
        <dbReference type="ChEBI" id="CHEBI:58210"/>
    </ligand>
</feature>
<feature type="binding site" evidence="1">
    <location>
        <position position="65"/>
    </location>
    <ligand>
        <name>substrate</name>
    </ligand>
</feature>
<feature type="binding site" evidence="1">
    <location>
        <position position="85"/>
    </location>
    <ligand>
        <name>FMN</name>
        <dbReference type="ChEBI" id="CHEBI:58210"/>
    </ligand>
</feature>
<feature type="binding site" evidence="1">
    <location>
        <begin position="110"/>
        <end position="114"/>
    </location>
    <ligand>
        <name>substrate</name>
    </ligand>
</feature>
<feature type="binding site" evidence="1">
    <location>
        <position position="139"/>
    </location>
    <ligand>
        <name>FMN</name>
        <dbReference type="ChEBI" id="CHEBI:58210"/>
    </ligand>
</feature>
<feature type="binding site" evidence="1">
    <location>
        <position position="172"/>
    </location>
    <ligand>
        <name>FMN</name>
        <dbReference type="ChEBI" id="CHEBI:58210"/>
    </ligand>
</feature>
<feature type="binding site" evidence="1">
    <location>
        <position position="172"/>
    </location>
    <ligand>
        <name>substrate</name>
    </ligand>
</feature>
<feature type="binding site" evidence="1">
    <location>
        <position position="177"/>
    </location>
    <ligand>
        <name>substrate</name>
    </ligand>
</feature>
<feature type="binding site" evidence="1">
    <location>
        <position position="217"/>
    </location>
    <ligand>
        <name>FMN</name>
        <dbReference type="ChEBI" id="CHEBI:58210"/>
    </ligand>
</feature>
<feature type="binding site" evidence="1">
    <location>
        <position position="245"/>
    </location>
    <ligand>
        <name>FMN</name>
        <dbReference type="ChEBI" id="CHEBI:58210"/>
    </ligand>
</feature>
<feature type="binding site" evidence="1">
    <location>
        <begin position="246"/>
        <end position="247"/>
    </location>
    <ligand>
        <name>substrate</name>
    </ligand>
</feature>
<feature type="binding site" evidence="1">
    <location>
        <position position="268"/>
    </location>
    <ligand>
        <name>FMN</name>
        <dbReference type="ChEBI" id="CHEBI:58210"/>
    </ligand>
</feature>
<feature type="binding site" evidence="1">
    <location>
        <position position="297"/>
    </location>
    <ligand>
        <name>FMN</name>
        <dbReference type="ChEBI" id="CHEBI:58210"/>
    </ligand>
</feature>
<feature type="binding site" evidence="1">
    <location>
        <begin position="318"/>
        <end position="319"/>
    </location>
    <ligand>
        <name>FMN</name>
        <dbReference type="ChEBI" id="CHEBI:58210"/>
    </ligand>
</feature>
<sequence length="351" mass="37440">MYSLARPLLFSLDAERAHALALRSIDTAYRTGTTSLLSTRPVPLPTPAFGLMFPNPVGLGAGLDKNGEHIDALLALGFGFVEIGTVTPRAQDGNPKPRMFRLPEYQAVINRMGFNNLGVDALVANVQRARRRGGLLGINIGKNKDTPNEEATSDYRYCMERVYPLADYITVNISSPNTAGLRELQEEQSLRRLISDLRETQEALGAQHGKRVPMLVKVAPDLNDRDIDAAARVLADLAVDGVIATNTTVTRPLIANHPLAAEAGGLSGAPLLGQSTLVLRRLRARLPESIPLIGVGGINSGADAVAKMAAGASLVQCYSGLVYRGPQLVGECVNAIRRRREAPSGGAVAPL</sequence>
<keyword id="KW-1003">Cell membrane</keyword>
<keyword id="KW-0285">Flavoprotein</keyword>
<keyword id="KW-0288">FMN</keyword>
<keyword id="KW-0472">Membrane</keyword>
<keyword id="KW-0560">Oxidoreductase</keyword>
<keyword id="KW-0665">Pyrimidine biosynthesis</keyword>
<keyword id="KW-1185">Reference proteome</keyword>
<organism>
    <name type="scientific">Xanthomonas oryzae pv. oryzae (strain KACC10331 / KXO85)</name>
    <dbReference type="NCBI Taxonomy" id="291331"/>
    <lineage>
        <taxon>Bacteria</taxon>
        <taxon>Pseudomonadati</taxon>
        <taxon>Pseudomonadota</taxon>
        <taxon>Gammaproteobacteria</taxon>
        <taxon>Lysobacterales</taxon>
        <taxon>Lysobacteraceae</taxon>
        <taxon>Xanthomonas</taxon>
    </lineage>
</organism>
<comment type="function">
    <text evidence="1">Catalyzes the conversion of dihydroorotate to orotate with quinone as electron acceptor.</text>
</comment>
<comment type="catalytic activity">
    <reaction evidence="1">
        <text>(S)-dihydroorotate + a quinone = orotate + a quinol</text>
        <dbReference type="Rhea" id="RHEA:30187"/>
        <dbReference type="ChEBI" id="CHEBI:24646"/>
        <dbReference type="ChEBI" id="CHEBI:30839"/>
        <dbReference type="ChEBI" id="CHEBI:30864"/>
        <dbReference type="ChEBI" id="CHEBI:132124"/>
        <dbReference type="EC" id="1.3.5.2"/>
    </reaction>
</comment>
<comment type="cofactor">
    <cofactor evidence="1">
        <name>FMN</name>
        <dbReference type="ChEBI" id="CHEBI:58210"/>
    </cofactor>
    <text evidence="1">Binds 1 FMN per subunit.</text>
</comment>
<comment type="pathway">
    <text evidence="1">Pyrimidine metabolism; UMP biosynthesis via de novo pathway; orotate from (S)-dihydroorotate (quinone route): step 1/1.</text>
</comment>
<comment type="subunit">
    <text evidence="1">Monomer.</text>
</comment>
<comment type="subcellular location">
    <subcellularLocation>
        <location evidence="1">Cell membrane</location>
        <topology evidence="1">Peripheral membrane protein</topology>
    </subcellularLocation>
</comment>
<comment type="similarity">
    <text evidence="1">Belongs to the dihydroorotate dehydrogenase family. Type 2 subfamily.</text>
</comment>
<gene>
    <name evidence="1" type="primary">pyrD</name>
    <name type="ordered locus">XOO2237</name>
</gene>
<reference key="1">
    <citation type="journal article" date="2005" name="Nucleic Acids Res.">
        <title>The genome sequence of Xanthomonas oryzae pathovar oryzae KACC10331, the bacterial blight pathogen of rice.</title>
        <authorList>
            <person name="Lee B.-M."/>
            <person name="Park Y.-J."/>
            <person name="Park D.-S."/>
            <person name="Kang H.-W."/>
            <person name="Kim J.-G."/>
            <person name="Song E.-S."/>
            <person name="Park I.-C."/>
            <person name="Yoon U.-H."/>
            <person name="Hahn J.-H."/>
            <person name="Koo B.-S."/>
            <person name="Lee G.-B."/>
            <person name="Kim H."/>
            <person name="Park H.-S."/>
            <person name="Yoon K.-O."/>
            <person name="Kim J.-H."/>
            <person name="Jung C.-H."/>
            <person name="Koh N.-H."/>
            <person name="Seo J.-S."/>
            <person name="Go S.-J."/>
        </authorList>
    </citation>
    <scope>NUCLEOTIDE SEQUENCE [LARGE SCALE GENOMIC DNA]</scope>
    <source>
        <strain>KACC10331 / KXO85</strain>
    </source>
</reference>
<protein>
    <recommendedName>
        <fullName evidence="1">Dihydroorotate dehydrogenase (quinone)</fullName>
        <ecNumber evidence="1">1.3.5.2</ecNumber>
    </recommendedName>
    <alternativeName>
        <fullName evidence="1">DHOdehase</fullName>
        <shortName evidence="1">DHOD</shortName>
        <shortName evidence="1">DHODase</shortName>
    </alternativeName>
    <alternativeName>
        <fullName evidence="1">Dihydroorotate oxidase</fullName>
    </alternativeName>
</protein>
<evidence type="ECO:0000255" key="1">
    <source>
        <dbReference type="HAMAP-Rule" id="MF_00225"/>
    </source>
</evidence>
<name>PYRD_XANOR</name>
<accession>Q5H0N0</accession>
<dbReference type="EC" id="1.3.5.2" evidence="1"/>
<dbReference type="EMBL" id="AE013598">
    <property type="protein sequence ID" value="AAW75491.1"/>
    <property type="molecule type" value="Genomic_DNA"/>
</dbReference>
<dbReference type="SMR" id="Q5H0N0"/>
<dbReference type="STRING" id="291331.XOO2237"/>
<dbReference type="KEGG" id="xoo:XOO2237"/>
<dbReference type="HOGENOM" id="CLU_013640_2_0_6"/>
<dbReference type="UniPathway" id="UPA00070">
    <property type="reaction ID" value="UER00946"/>
</dbReference>
<dbReference type="Proteomes" id="UP000006735">
    <property type="component" value="Chromosome"/>
</dbReference>
<dbReference type="GO" id="GO:0005737">
    <property type="term" value="C:cytoplasm"/>
    <property type="evidence" value="ECO:0007669"/>
    <property type="project" value="InterPro"/>
</dbReference>
<dbReference type="GO" id="GO:0005886">
    <property type="term" value="C:plasma membrane"/>
    <property type="evidence" value="ECO:0007669"/>
    <property type="project" value="UniProtKB-SubCell"/>
</dbReference>
<dbReference type="GO" id="GO:0106430">
    <property type="term" value="F:dihydroorotate dehydrogenase (quinone) activity"/>
    <property type="evidence" value="ECO:0007669"/>
    <property type="project" value="UniProtKB-EC"/>
</dbReference>
<dbReference type="GO" id="GO:0006207">
    <property type="term" value="P:'de novo' pyrimidine nucleobase biosynthetic process"/>
    <property type="evidence" value="ECO:0007669"/>
    <property type="project" value="InterPro"/>
</dbReference>
<dbReference type="GO" id="GO:0044205">
    <property type="term" value="P:'de novo' UMP biosynthetic process"/>
    <property type="evidence" value="ECO:0007669"/>
    <property type="project" value="UniProtKB-UniRule"/>
</dbReference>
<dbReference type="CDD" id="cd04738">
    <property type="entry name" value="DHOD_2_like"/>
    <property type="match status" value="1"/>
</dbReference>
<dbReference type="FunFam" id="3.20.20.70:FF:000028">
    <property type="entry name" value="Dihydroorotate dehydrogenase (quinone)"/>
    <property type="match status" value="1"/>
</dbReference>
<dbReference type="Gene3D" id="3.20.20.70">
    <property type="entry name" value="Aldolase class I"/>
    <property type="match status" value="1"/>
</dbReference>
<dbReference type="HAMAP" id="MF_00225">
    <property type="entry name" value="DHO_dh_type2"/>
    <property type="match status" value="1"/>
</dbReference>
<dbReference type="InterPro" id="IPR013785">
    <property type="entry name" value="Aldolase_TIM"/>
</dbReference>
<dbReference type="InterPro" id="IPR050074">
    <property type="entry name" value="DHO_dehydrogenase"/>
</dbReference>
<dbReference type="InterPro" id="IPR012135">
    <property type="entry name" value="Dihydroorotate_DH_1_2"/>
</dbReference>
<dbReference type="InterPro" id="IPR005719">
    <property type="entry name" value="Dihydroorotate_DH_2"/>
</dbReference>
<dbReference type="InterPro" id="IPR005720">
    <property type="entry name" value="Dihydroorotate_DH_cat"/>
</dbReference>
<dbReference type="InterPro" id="IPR001295">
    <property type="entry name" value="Dihydroorotate_DH_CS"/>
</dbReference>
<dbReference type="NCBIfam" id="NF003644">
    <property type="entry name" value="PRK05286.1-1"/>
    <property type="match status" value="1"/>
</dbReference>
<dbReference type="NCBIfam" id="NF003645">
    <property type="entry name" value="PRK05286.1-2"/>
    <property type="match status" value="1"/>
</dbReference>
<dbReference type="NCBIfam" id="NF003646">
    <property type="entry name" value="PRK05286.1-4"/>
    <property type="match status" value="1"/>
</dbReference>
<dbReference type="NCBIfam" id="NF003652">
    <property type="entry name" value="PRK05286.2-5"/>
    <property type="match status" value="1"/>
</dbReference>
<dbReference type="NCBIfam" id="TIGR01036">
    <property type="entry name" value="pyrD_sub2"/>
    <property type="match status" value="1"/>
</dbReference>
<dbReference type="PANTHER" id="PTHR48109:SF4">
    <property type="entry name" value="DIHYDROOROTATE DEHYDROGENASE (QUINONE), MITOCHONDRIAL"/>
    <property type="match status" value="1"/>
</dbReference>
<dbReference type="PANTHER" id="PTHR48109">
    <property type="entry name" value="DIHYDROOROTATE DEHYDROGENASE (QUINONE), MITOCHONDRIAL-RELATED"/>
    <property type="match status" value="1"/>
</dbReference>
<dbReference type="Pfam" id="PF01180">
    <property type="entry name" value="DHO_dh"/>
    <property type="match status" value="1"/>
</dbReference>
<dbReference type="PIRSF" id="PIRSF000164">
    <property type="entry name" value="DHO_oxidase"/>
    <property type="match status" value="1"/>
</dbReference>
<dbReference type="SUPFAM" id="SSF51395">
    <property type="entry name" value="FMN-linked oxidoreductases"/>
    <property type="match status" value="1"/>
</dbReference>
<dbReference type="PROSITE" id="PS00911">
    <property type="entry name" value="DHODEHASE_1"/>
    <property type="match status" value="1"/>
</dbReference>
<dbReference type="PROSITE" id="PS00912">
    <property type="entry name" value="DHODEHASE_2"/>
    <property type="match status" value="1"/>
</dbReference>
<proteinExistence type="inferred from homology"/>